<accession>Q8RI80</accession>
<reference key="1">
    <citation type="journal article" date="2002" name="J. Bacteriol.">
        <title>Genome sequence and analysis of the oral bacterium Fusobacterium nucleatum strain ATCC 25586.</title>
        <authorList>
            <person name="Kapatral V."/>
            <person name="Anderson I."/>
            <person name="Ivanova N."/>
            <person name="Reznik G."/>
            <person name="Los T."/>
            <person name="Lykidis A."/>
            <person name="Bhattacharyya A."/>
            <person name="Bartman A."/>
            <person name="Gardner W."/>
            <person name="Grechkin G."/>
            <person name="Zhu L."/>
            <person name="Vasieva O."/>
            <person name="Chu L."/>
            <person name="Kogan Y."/>
            <person name="Chaga O."/>
            <person name="Goltsman E."/>
            <person name="Bernal A."/>
            <person name="Larsen N."/>
            <person name="D'Souza M."/>
            <person name="Walunas T."/>
            <person name="Pusch G."/>
            <person name="Haselkorn R."/>
            <person name="Fonstein M."/>
            <person name="Kyrpides N.C."/>
            <person name="Overbeek R."/>
        </authorList>
    </citation>
    <scope>NUCLEOTIDE SEQUENCE [LARGE SCALE GENOMIC DNA]</scope>
    <source>
        <strain>ATCC 25586 / DSM 15643 / BCRC 10681 / CIP 101130 / JCM 8532 / KCTC 2640 / LMG 13131 / VPI 4355</strain>
    </source>
</reference>
<name>VATD_FUSNN</name>
<proteinExistence type="inferred from homology"/>
<sequence length="211" mass="24425">MAKLKVNPTRMALSELKKRLVTARRGHKLLKDKQDELMRQFINLIKENKKLRVEVEKELSDSFKSFLLASATMSPLFLESAISFPKEKIAVEMKLKNIMSVNVPEMKFVKEEMEGSIFPYGFVQTSAELDDTVIKLQKVLDNLLSLAEIEKSCQLMADEIEKTRRRVNALEYSTIPNLEETVKDIRMKLDENERATITRLMKVKQMLQKDA</sequence>
<organism>
    <name type="scientific">Fusobacterium nucleatum subsp. nucleatum (strain ATCC 25586 / DSM 15643 / BCRC 10681 / CIP 101130 / JCM 8532 / KCTC 2640 / LMG 13131 / VPI 4355)</name>
    <dbReference type="NCBI Taxonomy" id="190304"/>
    <lineage>
        <taxon>Bacteria</taxon>
        <taxon>Fusobacteriati</taxon>
        <taxon>Fusobacteriota</taxon>
        <taxon>Fusobacteriia</taxon>
        <taxon>Fusobacteriales</taxon>
        <taxon>Fusobacteriaceae</taxon>
        <taxon>Fusobacterium</taxon>
    </lineage>
</organism>
<feature type="chain" id="PRO_1000059158" description="V-type ATP synthase subunit D">
    <location>
        <begin position="1"/>
        <end position="211"/>
    </location>
</feature>
<comment type="function">
    <text evidence="1">Produces ATP from ADP in the presence of a proton gradient across the membrane.</text>
</comment>
<comment type="similarity">
    <text evidence="1">Belongs to the V-ATPase D subunit family.</text>
</comment>
<evidence type="ECO:0000255" key="1">
    <source>
        <dbReference type="HAMAP-Rule" id="MF_00271"/>
    </source>
</evidence>
<dbReference type="EMBL" id="AE009951">
    <property type="protein sequence ID" value="AAL93848.1"/>
    <property type="molecule type" value="Genomic_DNA"/>
</dbReference>
<dbReference type="RefSeq" id="NP_602549.1">
    <property type="nucleotide sequence ID" value="NC_003454.1"/>
</dbReference>
<dbReference type="RefSeq" id="WP_011015799.1">
    <property type="nucleotide sequence ID" value="NZ_CP028101.1"/>
</dbReference>
<dbReference type="SMR" id="Q8RI80"/>
<dbReference type="STRING" id="190304.FN1733"/>
<dbReference type="PaxDb" id="190304-FN1733"/>
<dbReference type="EnsemblBacteria" id="AAL93848">
    <property type="protein sequence ID" value="AAL93848"/>
    <property type="gene ID" value="FN1733"/>
</dbReference>
<dbReference type="GeneID" id="79782665"/>
<dbReference type="KEGG" id="fnu:FN1733"/>
<dbReference type="PATRIC" id="fig|190304.8.peg.222"/>
<dbReference type="eggNOG" id="COG1394">
    <property type="taxonomic scope" value="Bacteria"/>
</dbReference>
<dbReference type="HOGENOM" id="CLU_069688_2_1_0"/>
<dbReference type="InParanoid" id="Q8RI80"/>
<dbReference type="BioCyc" id="FNUC190304:G1FZS-233-MONOMER"/>
<dbReference type="Proteomes" id="UP000002521">
    <property type="component" value="Chromosome"/>
</dbReference>
<dbReference type="GO" id="GO:0033176">
    <property type="term" value="C:proton-transporting V-type ATPase complex"/>
    <property type="evidence" value="ECO:0000318"/>
    <property type="project" value="GO_Central"/>
</dbReference>
<dbReference type="GO" id="GO:0005524">
    <property type="term" value="F:ATP binding"/>
    <property type="evidence" value="ECO:0007669"/>
    <property type="project" value="UniProtKB-UniRule"/>
</dbReference>
<dbReference type="GO" id="GO:0046933">
    <property type="term" value="F:proton-transporting ATP synthase activity, rotational mechanism"/>
    <property type="evidence" value="ECO:0007669"/>
    <property type="project" value="UniProtKB-UniRule"/>
</dbReference>
<dbReference type="GO" id="GO:0046961">
    <property type="term" value="F:proton-transporting ATPase activity, rotational mechanism"/>
    <property type="evidence" value="ECO:0007669"/>
    <property type="project" value="InterPro"/>
</dbReference>
<dbReference type="GO" id="GO:0042777">
    <property type="term" value="P:proton motive force-driven plasma membrane ATP synthesis"/>
    <property type="evidence" value="ECO:0007669"/>
    <property type="project" value="UniProtKB-UniRule"/>
</dbReference>
<dbReference type="FunFam" id="1.10.287.3240:FF:000007">
    <property type="entry name" value="V-type ATP synthase subunit D"/>
    <property type="match status" value="1"/>
</dbReference>
<dbReference type="Gene3D" id="1.10.287.3240">
    <property type="match status" value="1"/>
</dbReference>
<dbReference type="HAMAP" id="MF_00271">
    <property type="entry name" value="ATP_synth_D_arch"/>
    <property type="match status" value="1"/>
</dbReference>
<dbReference type="InterPro" id="IPR002699">
    <property type="entry name" value="V_ATPase_D"/>
</dbReference>
<dbReference type="NCBIfam" id="NF001543">
    <property type="entry name" value="PRK00373.1-2"/>
    <property type="match status" value="1"/>
</dbReference>
<dbReference type="NCBIfam" id="TIGR00309">
    <property type="entry name" value="V_ATPase_subD"/>
    <property type="match status" value="1"/>
</dbReference>
<dbReference type="PANTHER" id="PTHR11671">
    <property type="entry name" value="V-TYPE ATP SYNTHASE SUBUNIT D"/>
    <property type="match status" value="1"/>
</dbReference>
<dbReference type="Pfam" id="PF01813">
    <property type="entry name" value="ATP-synt_D"/>
    <property type="match status" value="1"/>
</dbReference>
<protein>
    <recommendedName>
        <fullName evidence="1">V-type ATP synthase subunit D</fullName>
    </recommendedName>
    <alternativeName>
        <fullName evidence="1">V-ATPase subunit D</fullName>
    </alternativeName>
</protein>
<gene>
    <name evidence="1" type="primary">atpD</name>
    <name type="ordered locus">FN1733</name>
</gene>
<keyword id="KW-0066">ATP synthesis</keyword>
<keyword id="KW-0375">Hydrogen ion transport</keyword>
<keyword id="KW-0406">Ion transport</keyword>
<keyword id="KW-1185">Reference proteome</keyword>
<keyword id="KW-0813">Transport</keyword>